<proteinExistence type="evidence at protein level"/>
<feature type="chain" id="PRO_0000350845" description="Scarecrow-like transcription factor PAT1">
    <location>
        <begin position="1"/>
        <end position="490"/>
    </location>
</feature>
<feature type="domain" description="GRAS" evidence="1">
    <location>
        <begin position="110"/>
        <end position="490"/>
    </location>
</feature>
<feature type="region of interest" description="Leucine repeat I (LRI)" evidence="1">
    <location>
        <begin position="117"/>
        <end position="178"/>
    </location>
</feature>
<feature type="region of interest" description="VHIID" evidence="1">
    <location>
        <begin position="197"/>
        <end position="262"/>
    </location>
</feature>
<feature type="region of interest" description="Leucine repeat II (LRII)" evidence="1">
    <location>
        <begin position="278"/>
        <end position="310"/>
    </location>
</feature>
<feature type="region of interest" description="PFYRE" evidence="1">
    <location>
        <begin position="319"/>
        <end position="413"/>
    </location>
</feature>
<feature type="region of interest" description="SAW" evidence="1">
    <location>
        <begin position="416"/>
        <end position="490"/>
    </location>
</feature>
<feature type="short sequence motif" description="VHIID" evidence="1">
    <location>
        <begin position="228"/>
        <end position="232"/>
    </location>
</feature>
<gene>
    <name type="primary">PAT1</name>
    <name type="ordered locus">At5g48150</name>
    <name type="ORF">MIF21.4</name>
</gene>
<name>PAT1_ARATH</name>
<keyword id="KW-0963">Cytoplasm</keyword>
<keyword id="KW-1185">Reference proteome</keyword>
<keyword id="KW-0804">Transcription</keyword>
<keyword id="KW-0805">Transcription regulation</keyword>
<dbReference type="EMBL" id="AF153443">
    <property type="protein sequence ID" value="AAF73237.1"/>
    <property type="molecule type" value="mRNA"/>
</dbReference>
<dbReference type="EMBL" id="AB023039">
    <property type="protein sequence ID" value="BAA96995.1"/>
    <property type="molecule type" value="Genomic_DNA"/>
</dbReference>
<dbReference type="EMBL" id="CP002688">
    <property type="protein sequence ID" value="AED95624.1"/>
    <property type="molecule type" value="Genomic_DNA"/>
</dbReference>
<dbReference type="EMBL" id="CP002688">
    <property type="protein sequence ID" value="AED95625.1"/>
    <property type="molecule type" value="Genomic_DNA"/>
</dbReference>
<dbReference type="EMBL" id="CP002688">
    <property type="protein sequence ID" value="ANM70908.1"/>
    <property type="molecule type" value="Genomic_DNA"/>
</dbReference>
<dbReference type="EMBL" id="CP002688">
    <property type="protein sequence ID" value="ANM70909.1"/>
    <property type="molecule type" value="Genomic_DNA"/>
</dbReference>
<dbReference type="EMBL" id="BT025326">
    <property type="protein sequence ID" value="ABF57282.1"/>
    <property type="molecule type" value="mRNA"/>
</dbReference>
<dbReference type="EMBL" id="AK117483">
    <property type="protein sequence ID" value="BAC42147.1"/>
    <property type="status" value="ALT_INIT"/>
    <property type="molecule type" value="mRNA"/>
</dbReference>
<dbReference type="RefSeq" id="NP_001332482.1">
    <property type="nucleotide sequence ID" value="NM_001344761.1"/>
</dbReference>
<dbReference type="RefSeq" id="NP_001332483.1">
    <property type="nucleotide sequence ID" value="NM_001344762.1"/>
</dbReference>
<dbReference type="RefSeq" id="NP_199626.1">
    <property type="nucleotide sequence ID" value="NM_124189.6"/>
</dbReference>
<dbReference type="RefSeq" id="NP_974903.1">
    <property type="nucleotide sequence ID" value="NM_203174.3"/>
</dbReference>
<dbReference type="SMR" id="Q9LDL7"/>
<dbReference type="BioGRID" id="20114">
    <property type="interactions" value="3"/>
</dbReference>
<dbReference type="FunCoup" id="Q9LDL7">
    <property type="interactions" value="712"/>
</dbReference>
<dbReference type="IntAct" id="Q9LDL7">
    <property type="interactions" value="3"/>
</dbReference>
<dbReference type="STRING" id="3702.Q9LDL7"/>
<dbReference type="PaxDb" id="3702-AT5G48150.2"/>
<dbReference type="ProteomicsDB" id="236326"/>
<dbReference type="EnsemblPlants" id="AT5G48150.1">
    <property type="protein sequence ID" value="AT5G48150.1"/>
    <property type="gene ID" value="AT5G48150"/>
</dbReference>
<dbReference type="EnsemblPlants" id="AT5G48150.2">
    <property type="protein sequence ID" value="AT5G48150.2"/>
    <property type="gene ID" value="AT5G48150"/>
</dbReference>
<dbReference type="EnsemblPlants" id="AT5G48150.3">
    <property type="protein sequence ID" value="AT5G48150.3"/>
    <property type="gene ID" value="AT5G48150"/>
</dbReference>
<dbReference type="EnsemblPlants" id="AT5G48150.4">
    <property type="protein sequence ID" value="AT5G48150.4"/>
    <property type="gene ID" value="AT5G48150"/>
</dbReference>
<dbReference type="GeneID" id="834867"/>
<dbReference type="Gramene" id="AT5G48150.1">
    <property type="protein sequence ID" value="AT5G48150.1"/>
    <property type="gene ID" value="AT5G48150"/>
</dbReference>
<dbReference type="Gramene" id="AT5G48150.2">
    <property type="protein sequence ID" value="AT5G48150.2"/>
    <property type="gene ID" value="AT5G48150"/>
</dbReference>
<dbReference type="Gramene" id="AT5G48150.3">
    <property type="protein sequence ID" value="AT5G48150.3"/>
    <property type="gene ID" value="AT5G48150"/>
</dbReference>
<dbReference type="Gramene" id="AT5G48150.4">
    <property type="protein sequence ID" value="AT5G48150.4"/>
    <property type="gene ID" value="AT5G48150"/>
</dbReference>
<dbReference type="KEGG" id="ath:AT5G48150"/>
<dbReference type="Araport" id="AT5G48150"/>
<dbReference type="TAIR" id="AT5G48150">
    <property type="gene designation" value="PAT1"/>
</dbReference>
<dbReference type="eggNOG" id="ENOG502QRZD">
    <property type="taxonomic scope" value="Eukaryota"/>
</dbReference>
<dbReference type="HOGENOM" id="CLU_011924_6_0_1"/>
<dbReference type="InParanoid" id="Q9LDL7"/>
<dbReference type="OMA" id="CDVQLHN"/>
<dbReference type="PhylomeDB" id="Q9LDL7"/>
<dbReference type="PRO" id="PR:Q9LDL7"/>
<dbReference type="Proteomes" id="UP000006548">
    <property type="component" value="Chromosome 5"/>
</dbReference>
<dbReference type="ExpressionAtlas" id="Q9LDL7">
    <property type="expression patterns" value="baseline and differential"/>
</dbReference>
<dbReference type="GO" id="GO:0005737">
    <property type="term" value="C:cytoplasm"/>
    <property type="evidence" value="ECO:0000314"/>
    <property type="project" value="TAIR"/>
</dbReference>
<dbReference type="GO" id="GO:0003700">
    <property type="term" value="F:DNA-binding transcription factor activity"/>
    <property type="evidence" value="ECO:0000250"/>
    <property type="project" value="TAIR"/>
</dbReference>
<dbReference type="GO" id="GO:0000976">
    <property type="term" value="F:transcription cis-regulatory region binding"/>
    <property type="evidence" value="ECO:0000353"/>
    <property type="project" value="TAIR"/>
</dbReference>
<dbReference type="GO" id="GO:1990110">
    <property type="term" value="P:callus formation"/>
    <property type="evidence" value="ECO:0000316"/>
    <property type="project" value="TAIR"/>
</dbReference>
<dbReference type="GO" id="GO:0009640">
    <property type="term" value="P:photomorphogenesis"/>
    <property type="evidence" value="ECO:0000315"/>
    <property type="project" value="TAIR"/>
</dbReference>
<dbReference type="GO" id="GO:0009585">
    <property type="term" value="P:red, far-red light phototransduction"/>
    <property type="evidence" value="ECO:0000315"/>
    <property type="project" value="TAIR"/>
</dbReference>
<dbReference type="InterPro" id="IPR005202">
    <property type="entry name" value="TF_GRAS"/>
</dbReference>
<dbReference type="PANTHER" id="PTHR31636">
    <property type="entry name" value="OSJNBA0084A10.13 PROTEIN-RELATED"/>
    <property type="match status" value="1"/>
</dbReference>
<dbReference type="Pfam" id="PF03514">
    <property type="entry name" value="GRAS"/>
    <property type="match status" value="1"/>
</dbReference>
<dbReference type="PROSITE" id="PS50985">
    <property type="entry name" value="GRAS"/>
    <property type="match status" value="1"/>
</dbReference>
<sequence>MYKQPRQELEAYYFEPNSVEKLRYLPVNNSRKRFCTLEPFPDSPPYNALSTATYDDTCGSCVTDELNDFKHKIREIETVMMGPDSLDLLVDCTDSFDSTASQEINGWRSTLEAISRRDLRADLVSCAKAMSENDLMMAHSMMEKLRQMVSVSGEPIQRLGAYLLEGLVAQLASSGSSIYKALNRCPEPASTELLSYMHILYEVCPYFKFGYMSANGAIAEAMKEENRVHIIDFQIGQGSQWVTLIQAFAARPGGPPRIRITGIDDMTSAYARGGGLSIVGNRLAKLAKQFNVPFEFNSVSVSVSEVKPKNLGVRPGEALAVNFAFVLHHMPDESVSTENHRDRLLRMVKSLSPKVVTLVEQESNTNTAAFFPRFMETMNYYAAMFESIDVTLPRDHKQRINVEQHCLARDVVNIIACEGADRVERHELLGKWRSRFGMAGFTPYPLSPLVNSTIKSLLRNYSDKYRLEERDGALYLGWMHRDLVASCAWK</sequence>
<comment type="function">
    <text evidence="2">Probable transcription factor involved in phytochrome A (phyA) signal transduction.</text>
</comment>
<comment type="interaction">
    <interactant intactId="EBI-25514815">
        <id>Q9LDL7</id>
    </interactant>
    <interactant intactId="EBI-2130977">
        <id>Q9LY29</id>
        <label>ERF115</label>
    </interactant>
    <organismsDiffer>false</organismsDiffer>
    <experiments>3</experiments>
</comment>
<comment type="subcellular location">
    <subcellularLocation>
        <location evidence="2">Cytoplasm</location>
    </subcellularLocation>
</comment>
<comment type="disruption phenotype">
    <text evidence="2">Plants display reduced response to far-red (FR) light. Seedlings develop long hypocotyls, unfolded cotyledons, no significant anthocyanin accumulation, and greening after FR light.</text>
</comment>
<comment type="similarity">
    <text evidence="3">Belongs to the GRAS family.</text>
</comment>
<comment type="sequence caution" evidence="3">
    <conflict type="erroneous initiation">
        <sequence resource="EMBL-CDS" id="BAC42147"/>
    </conflict>
</comment>
<evidence type="ECO:0000255" key="1">
    <source>
        <dbReference type="PROSITE-ProRule" id="PRU01191"/>
    </source>
</evidence>
<evidence type="ECO:0000269" key="2">
    <source>
    </source>
</evidence>
<evidence type="ECO:0000305" key="3"/>
<protein>
    <recommendedName>
        <fullName>Scarecrow-like transcription factor PAT1</fullName>
    </recommendedName>
    <alternativeName>
        <fullName>GRAS family protein 29</fullName>
        <shortName>AtGRAS-29</shortName>
    </alternativeName>
    <alternativeName>
        <fullName>Protein PHYTOCHROME A SIGNAL TRANSDUCTION 1</fullName>
    </alternativeName>
</protein>
<accession>Q9LDL7</accession>
<accession>Q8GYN7</accession>
<organism>
    <name type="scientific">Arabidopsis thaliana</name>
    <name type="common">Mouse-ear cress</name>
    <dbReference type="NCBI Taxonomy" id="3702"/>
    <lineage>
        <taxon>Eukaryota</taxon>
        <taxon>Viridiplantae</taxon>
        <taxon>Streptophyta</taxon>
        <taxon>Embryophyta</taxon>
        <taxon>Tracheophyta</taxon>
        <taxon>Spermatophyta</taxon>
        <taxon>Magnoliopsida</taxon>
        <taxon>eudicotyledons</taxon>
        <taxon>Gunneridae</taxon>
        <taxon>Pentapetalae</taxon>
        <taxon>rosids</taxon>
        <taxon>malvids</taxon>
        <taxon>Brassicales</taxon>
        <taxon>Brassicaceae</taxon>
        <taxon>Camelineae</taxon>
        <taxon>Arabidopsis</taxon>
    </lineage>
</organism>
<reference key="1">
    <citation type="journal article" date="2000" name="Genes Dev.">
        <title>PAT1, a new member of the GRAS family, is involved in phytochrome A signal transduction.</title>
        <authorList>
            <person name="Bolle C."/>
            <person name="Koncz C."/>
            <person name="Chua N.-H."/>
        </authorList>
    </citation>
    <scope>NUCLEOTIDE SEQUENCE [MRNA]</scope>
    <scope>FUNCTION</scope>
    <scope>SUBCELLULAR LOCATION</scope>
    <scope>DISRUPTION PHENOTYPE</scope>
</reference>
<reference key="2">
    <citation type="journal article" date="2000" name="DNA Res.">
        <title>Structural analysis of Arabidopsis thaliana chromosome 5. X. Sequence features of the regions of 3,076,755 bp covered by sixty P1 and TAC clones.</title>
        <authorList>
            <person name="Sato S."/>
            <person name="Nakamura Y."/>
            <person name="Kaneko T."/>
            <person name="Katoh T."/>
            <person name="Asamizu E."/>
            <person name="Kotani H."/>
            <person name="Tabata S."/>
        </authorList>
    </citation>
    <scope>NUCLEOTIDE SEQUENCE [LARGE SCALE GENOMIC DNA]</scope>
    <source>
        <strain>cv. Columbia</strain>
    </source>
</reference>
<reference key="3">
    <citation type="journal article" date="2017" name="Plant J.">
        <title>Araport11: a complete reannotation of the Arabidopsis thaliana reference genome.</title>
        <authorList>
            <person name="Cheng C.Y."/>
            <person name="Krishnakumar V."/>
            <person name="Chan A.P."/>
            <person name="Thibaud-Nissen F."/>
            <person name="Schobel S."/>
            <person name="Town C.D."/>
        </authorList>
    </citation>
    <scope>GENOME REANNOTATION</scope>
    <source>
        <strain>cv. Columbia</strain>
    </source>
</reference>
<reference key="4">
    <citation type="submission" date="2006-05" db="EMBL/GenBank/DDBJ databases">
        <title>Arabidopsis ORF clones.</title>
        <authorList>
            <person name="Shinn P."/>
            <person name="Chen H."/>
            <person name="Kim C.J."/>
            <person name="Quinitio C."/>
            <person name="Ecker J.R."/>
        </authorList>
    </citation>
    <scope>NUCLEOTIDE SEQUENCE [LARGE SCALE MRNA]</scope>
    <source>
        <strain>cv. Columbia</strain>
    </source>
</reference>
<reference key="5">
    <citation type="journal article" date="2002" name="Science">
        <title>Functional annotation of a full-length Arabidopsis cDNA collection.</title>
        <authorList>
            <person name="Seki M."/>
            <person name="Narusaka M."/>
            <person name="Kamiya A."/>
            <person name="Ishida J."/>
            <person name="Satou M."/>
            <person name="Sakurai T."/>
            <person name="Nakajima M."/>
            <person name="Enju A."/>
            <person name="Akiyama K."/>
            <person name="Oono Y."/>
            <person name="Muramatsu M."/>
            <person name="Hayashizaki Y."/>
            <person name="Kawai J."/>
            <person name="Carninci P."/>
            <person name="Itoh M."/>
            <person name="Ishii Y."/>
            <person name="Arakawa T."/>
            <person name="Shibata K."/>
            <person name="Shinagawa A."/>
            <person name="Shinozaki K."/>
        </authorList>
    </citation>
    <scope>NUCLEOTIDE SEQUENCE [LARGE SCALE MRNA] OF 55-490</scope>
    <source>
        <strain>cv. Columbia</strain>
    </source>
</reference>
<reference key="6">
    <citation type="journal article" date="2004" name="Plant Mol. Biol.">
        <title>Genome-wide analysis of the GRAS gene family in rice and Arabidopsis.</title>
        <authorList>
            <person name="Tian C."/>
            <person name="Wan P."/>
            <person name="Sun S."/>
            <person name="Li J."/>
            <person name="Chen M."/>
        </authorList>
    </citation>
    <scope>GENE FAMILY</scope>
</reference>
<reference key="7">
    <citation type="journal article" date="2008" name="Plant Mol. Biol.">
        <title>Large-scale analysis of the GRAS gene family in Arabidopsis thaliana.</title>
        <authorList>
            <person name="Lee M.-H."/>
            <person name="Kim B."/>
            <person name="Song S.-K."/>
            <person name="Heo J.-O."/>
            <person name="Yu N.-I."/>
            <person name="Lee S.A."/>
            <person name="Kim M."/>
            <person name="Kim D.G."/>
            <person name="Sohn S.O."/>
            <person name="Lim C.E."/>
            <person name="Chang K.S."/>
            <person name="Lee M.M."/>
            <person name="Lim J."/>
        </authorList>
    </citation>
    <scope>GENE FAMILY</scope>
    <scope>TISSUE SPECIFICITY</scope>
</reference>